<feature type="chain" id="PRO_0000284449" description="JNK-interacting protein 3">
    <location>
        <begin position="1"/>
        <end position="1235"/>
    </location>
</feature>
<feature type="domain" description="RH1" evidence="5">
    <location>
        <begin position="25"/>
        <end position="113"/>
    </location>
</feature>
<feature type="domain" description="RH2" evidence="6">
    <location>
        <begin position="456"/>
        <end position="526"/>
    </location>
</feature>
<feature type="region of interest" description="Disordered" evidence="7">
    <location>
        <begin position="1"/>
        <end position="22"/>
    </location>
</feature>
<feature type="region of interest" description="Disordered" evidence="7">
    <location>
        <begin position="278"/>
        <end position="325"/>
    </location>
</feature>
<feature type="region of interest" description="Disordered" evidence="7">
    <location>
        <begin position="520"/>
        <end position="572"/>
    </location>
</feature>
<feature type="region of interest" description="Disordered" evidence="7">
    <location>
        <begin position="813"/>
        <end position="852"/>
    </location>
</feature>
<feature type="region of interest" description="Disordered" evidence="7">
    <location>
        <begin position="869"/>
        <end position="897"/>
    </location>
</feature>
<feature type="coiled-coil region" evidence="4">
    <location>
        <begin position="84"/>
        <end position="184"/>
    </location>
</feature>
<feature type="coiled-coil region" evidence="4">
    <location>
        <begin position="366"/>
        <end position="493"/>
    </location>
</feature>
<feature type="compositionally biased region" description="Polar residues" evidence="7">
    <location>
        <begin position="282"/>
        <end position="293"/>
    </location>
</feature>
<feature type="compositionally biased region" description="Pro residues" evidence="7">
    <location>
        <begin position="294"/>
        <end position="307"/>
    </location>
</feature>
<feature type="compositionally biased region" description="Gly residues" evidence="7">
    <location>
        <begin position="529"/>
        <end position="543"/>
    </location>
</feature>
<feature type="compositionally biased region" description="Low complexity" evidence="7">
    <location>
        <begin position="544"/>
        <end position="555"/>
    </location>
</feature>
<feature type="compositionally biased region" description="Low complexity" evidence="7">
    <location>
        <begin position="821"/>
        <end position="830"/>
    </location>
</feature>
<feature type="compositionally biased region" description="Polar residues" evidence="7">
    <location>
        <begin position="874"/>
        <end position="897"/>
    </location>
</feature>
<comment type="function">
    <text evidence="1">The JNK-interacting protein (JIP) group of scaffold proteins selectively mediates JNK-signaling by aggregating specific components of the MAPK cascade to form a functional JNK signaling module. May function as a regulator of vesicle transport, through interactions with the JNK-signaling components and motor proteins. Syd is required for efficient kinesin-I mediated axonal transport (By similarity).</text>
</comment>
<comment type="subunit">
    <text evidence="1">Forms homo- and heterooligomeric complexes. Binds the TPR motif-containing C-terminal of kinesin light chain, Klc. Pre-assembled syd scaffolding complexes are then transported as a cargo of kinesin, to the required subcellular location (By similarity).</text>
</comment>
<comment type="subcellular location">
    <subcellularLocation>
        <location evidence="2">Cytoplasm</location>
    </subcellularLocation>
</comment>
<comment type="similarity">
    <text evidence="4">Belongs to the JIP scaffold family.</text>
</comment>
<reference key="1">
    <citation type="journal article" date="2005" name="Genome Res.">
        <title>Comparative genome sequencing of Drosophila pseudoobscura: chromosomal, gene, and cis-element evolution.</title>
        <authorList>
            <person name="Richards S."/>
            <person name="Liu Y."/>
            <person name="Bettencourt B.R."/>
            <person name="Hradecky P."/>
            <person name="Letovsky S."/>
            <person name="Nielsen R."/>
            <person name="Thornton K."/>
            <person name="Hubisz M.J."/>
            <person name="Chen R."/>
            <person name="Meisel R.P."/>
            <person name="Couronne O."/>
            <person name="Hua S."/>
            <person name="Smith M.A."/>
            <person name="Zhang P."/>
            <person name="Liu J."/>
            <person name="Bussemaker H.J."/>
            <person name="van Batenburg M.F."/>
            <person name="Howells S.L."/>
            <person name="Scherer S.E."/>
            <person name="Sodergren E."/>
            <person name="Matthews B.B."/>
            <person name="Crosby M.A."/>
            <person name="Schroeder A.J."/>
            <person name="Ortiz-Barrientos D."/>
            <person name="Rives C.M."/>
            <person name="Metzker M.L."/>
            <person name="Muzny D.M."/>
            <person name="Scott G."/>
            <person name="Steffen D."/>
            <person name="Wheeler D.A."/>
            <person name="Worley K.C."/>
            <person name="Havlak P."/>
            <person name="Durbin K.J."/>
            <person name="Egan A."/>
            <person name="Gill R."/>
            <person name="Hume J."/>
            <person name="Morgan M.B."/>
            <person name="Miner G."/>
            <person name="Hamilton C."/>
            <person name="Huang Y."/>
            <person name="Waldron L."/>
            <person name="Verduzco D."/>
            <person name="Clerc-Blankenburg K.P."/>
            <person name="Dubchak I."/>
            <person name="Noor M.A.F."/>
            <person name="Anderson W."/>
            <person name="White K.P."/>
            <person name="Clark A.G."/>
            <person name="Schaeffer S.W."/>
            <person name="Gelbart W.M."/>
            <person name="Weinstock G.M."/>
            <person name="Gibbs R.A."/>
        </authorList>
    </citation>
    <scope>NUCLEOTIDE SEQUENCE [LARGE SCALE GENOMIC DNA]</scope>
    <source>
        <strain>MV2-25 / Tucson 14011-0121.94</strain>
    </source>
</reference>
<dbReference type="EMBL" id="CH379070">
    <property type="protein sequence ID" value="EAL30014.2"/>
    <property type="molecule type" value="Genomic_DNA"/>
</dbReference>
<dbReference type="RefSeq" id="XP_001352517.2">
    <property type="nucleotide sequence ID" value="XM_001352481.3"/>
</dbReference>
<dbReference type="SMR" id="Q29EP6"/>
<dbReference type="FunCoup" id="Q29EP6">
    <property type="interactions" value="1477"/>
</dbReference>
<dbReference type="STRING" id="46245.Q29EP6"/>
<dbReference type="EnsemblMetazoa" id="FBtr0288268">
    <property type="protein sequence ID" value="FBpp0286706"/>
    <property type="gene ID" value="FBgn0080821"/>
</dbReference>
<dbReference type="GeneID" id="4812552"/>
<dbReference type="KEGG" id="dpo:4812552"/>
<dbReference type="CTD" id="43905"/>
<dbReference type="eggNOG" id="KOG2077">
    <property type="taxonomic scope" value="Eukaryota"/>
</dbReference>
<dbReference type="HOGENOM" id="CLU_003841_0_0_1"/>
<dbReference type="InParanoid" id="Q29EP6"/>
<dbReference type="OMA" id="WEVDAEL"/>
<dbReference type="ChiTaRS" id="Sdc">
    <property type="organism name" value="fly"/>
</dbReference>
<dbReference type="Proteomes" id="UP000001819">
    <property type="component" value="Chromosome X"/>
</dbReference>
<dbReference type="Bgee" id="FBgn0080821">
    <property type="expression patterns" value="Expressed in insect adult head and 2 other cell types or tissues"/>
</dbReference>
<dbReference type="ExpressionAtlas" id="Q29EP6">
    <property type="expression patterns" value="baseline"/>
</dbReference>
<dbReference type="GO" id="GO:0000139">
    <property type="term" value="C:Golgi membrane"/>
    <property type="evidence" value="ECO:0000250"/>
    <property type="project" value="UniProtKB"/>
</dbReference>
<dbReference type="GO" id="GO:0043005">
    <property type="term" value="C:neuron projection"/>
    <property type="evidence" value="ECO:0007669"/>
    <property type="project" value="GOC"/>
</dbReference>
<dbReference type="GO" id="GO:0030140">
    <property type="term" value="C:trans-Golgi network transport vesicle"/>
    <property type="evidence" value="ECO:0000250"/>
    <property type="project" value="UniProtKB"/>
</dbReference>
<dbReference type="GO" id="GO:0008432">
    <property type="term" value="F:JUN kinase binding"/>
    <property type="evidence" value="ECO:0007669"/>
    <property type="project" value="TreeGrafter"/>
</dbReference>
<dbReference type="GO" id="GO:0019894">
    <property type="term" value="F:kinesin binding"/>
    <property type="evidence" value="ECO:0000250"/>
    <property type="project" value="UniProtKB"/>
</dbReference>
<dbReference type="GO" id="GO:0005078">
    <property type="term" value="F:MAP-kinase scaffold activity"/>
    <property type="evidence" value="ECO:0000250"/>
    <property type="project" value="UniProtKB"/>
</dbReference>
<dbReference type="GO" id="GO:0030159">
    <property type="term" value="F:signaling receptor complex adaptor activity"/>
    <property type="evidence" value="ECO:0007669"/>
    <property type="project" value="TreeGrafter"/>
</dbReference>
<dbReference type="GO" id="GO:0008088">
    <property type="term" value="P:axo-dendritic transport"/>
    <property type="evidence" value="ECO:0000250"/>
    <property type="project" value="UniProtKB"/>
</dbReference>
<dbReference type="GO" id="GO:0046328">
    <property type="term" value="P:regulation of JNK cascade"/>
    <property type="evidence" value="ECO:0000250"/>
    <property type="project" value="UniProtKB"/>
</dbReference>
<dbReference type="GO" id="GO:0016192">
    <property type="term" value="P:vesicle-mediated transport"/>
    <property type="evidence" value="ECO:0000250"/>
    <property type="project" value="UniProtKB"/>
</dbReference>
<dbReference type="FunFam" id="1.20.5.1000:FF:000001">
    <property type="entry name" value="C-Jun-amino-terminal kinase-interacting protein 3 isoform X2"/>
    <property type="match status" value="1"/>
</dbReference>
<dbReference type="Gene3D" id="1.20.5.1000">
    <property type="entry name" value="arf6 gtpase in complex with a specific effector, jip4"/>
    <property type="match status" value="1"/>
</dbReference>
<dbReference type="Gene3D" id="2.130.10.10">
    <property type="entry name" value="YVTN repeat-like/Quinoprotein amine dehydrogenase"/>
    <property type="match status" value="1"/>
</dbReference>
<dbReference type="InterPro" id="IPR039911">
    <property type="entry name" value="JIP3/JIP4"/>
</dbReference>
<dbReference type="InterPro" id="IPR032486">
    <property type="entry name" value="JIP_LZII"/>
</dbReference>
<dbReference type="InterPro" id="IPR034743">
    <property type="entry name" value="RH1"/>
</dbReference>
<dbReference type="InterPro" id="IPR034744">
    <property type="entry name" value="RH2"/>
</dbReference>
<dbReference type="InterPro" id="IPR015943">
    <property type="entry name" value="WD40/YVTN_repeat-like_dom_sf"/>
</dbReference>
<dbReference type="InterPro" id="IPR036322">
    <property type="entry name" value="WD40_repeat_dom_sf"/>
</dbReference>
<dbReference type="PANTHER" id="PTHR13886:SF4">
    <property type="entry name" value="JNK-INTERACTING PROTEIN 3"/>
    <property type="match status" value="1"/>
</dbReference>
<dbReference type="PANTHER" id="PTHR13886">
    <property type="entry name" value="JNK/SAPK-ASSOCIATED PROTEIN"/>
    <property type="match status" value="1"/>
</dbReference>
<dbReference type="Pfam" id="PF16471">
    <property type="entry name" value="JIP_LZII"/>
    <property type="match status" value="1"/>
</dbReference>
<dbReference type="Pfam" id="PF09744">
    <property type="entry name" value="RH1"/>
    <property type="match status" value="1"/>
</dbReference>
<dbReference type="Pfam" id="PF19056">
    <property type="entry name" value="WD40_2"/>
    <property type="match status" value="1"/>
</dbReference>
<dbReference type="SUPFAM" id="SSF50978">
    <property type="entry name" value="WD40 repeat-like"/>
    <property type="match status" value="1"/>
</dbReference>
<dbReference type="PROSITE" id="PS51776">
    <property type="entry name" value="RH1"/>
    <property type="match status" value="1"/>
</dbReference>
<dbReference type="PROSITE" id="PS51777">
    <property type="entry name" value="RH2"/>
    <property type="match status" value="1"/>
</dbReference>
<keyword id="KW-0175">Coiled coil</keyword>
<keyword id="KW-0963">Cytoplasm</keyword>
<keyword id="KW-1185">Reference proteome</keyword>
<proteinExistence type="inferred from homology"/>
<evidence type="ECO:0000250" key="1"/>
<evidence type="ECO:0000250" key="2">
    <source>
        <dbReference type="UniProtKB" id="Q58A65"/>
    </source>
</evidence>
<evidence type="ECO:0000250" key="3">
    <source>
        <dbReference type="UniProtKB" id="Q9GQF1"/>
    </source>
</evidence>
<evidence type="ECO:0000255" key="4"/>
<evidence type="ECO:0000255" key="5">
    <source>
        <dbReference type="PROSITE-ProRule" id="PRU01112"/>
    </source>
</evidence>
<evidence type="ECO:0000255" key="6">
    <source>
        <dbReference type="PROSITE-ProRule" id="PRU01113"/>
    </source>
</evidence>
<evidence type="ECO:0000256" key="7">
    <source>
        <dbReference type="SAM" id="MobiDB-lite"/>
    </source>
</evidence>
<name>JIP3_DROPS</name>
<gene>
    <name evidence="3" type="primary">syd</name>
    <name type="ORF">GA20831</name>
</gene>
<sequence>MMDNDDALLNNGGPQSGAETVYGTEDNNMVMSEKNDQVVSIVQQLAGSIYQEFERMINRYDEDVVKNLMPLLVNVLECLDASYRINQEQDVELELLREDNEQLVTQYEREKSARKQSEQKLLEAEDLAEQENKELATRLESVESIVRMLELKHKNSLEHASRLEERETDLKKEYNKLHERYTELFKNHVDYMERTKMLMGSTHSQMSTASDRMEVSRARLNPVARSSGPVSYGFASLENSVMLDTETICSVGSQSDDSGPPSLQNELDMSLPSTAERGAATDSLQQQHQATSPQSPPDTSPVVPNVPPANVGRSTTKKEQRSDNNLYQELSFQDNEESEENEIVTGCWVHPGEYASSANDNYFGMGKEVENLIMENNELLATKNALNIVKDDLIVKVDELTGEVEIVREELSAMQQSRTKLRQRISELEEELKKTKEQVKQQNTEQEENDVPLAQRKRFTRVEMAMVLMERNQYKERLMELQEAVRLTEILRASRTVDNLDKKSKQSIWKYFSNLFTPSNRPTERIADGLGGGPMFRNTGGGSPAHSHGSPSRGSGDNRLTLAGSQPPMHPASAGLANALVMPKDYSEDGGSERISARRREQYRQLRAHVQKEDGRLHAYGWSLPINKANQEANPSRHSGGVPVPVYCNPLAEASPHMKVFCAAGVNLHGGFTKDGQSLIPADSPYAPKSTLKITEITSPTAEQSVEALDRQIARASLETLEPETQLSSFVWICTSTHAASTVSVVDANQSATVLDAFPICSSHLLCIASVQGAMESDYALLEQSEVVKAGEMLQRPGEGTELLGKVEFVRVKPKSEDEQNSNSKPQQQQQDEEEAKEATEKSNEPLPPVNAEEPLVNVEAIKIRQALPGAPQRLSSGNSGSDGNQANNNNSSSTGSVLFATKSLNPILGTKEREDPPMTSVGPTMWMGAQDGWLYVHSGVGRWHECLHRVLLPDAVLAIVHVEARVVVALANAQLAVFRRQTDGQWDLNSYHLVTLGDRNHSIRCLCVAGERIWAAHRNKIFIVDPISLNIVHSLDAHPRKESQVRQMAATGAGVWVSIRLDSTLRLYNTHTFEHKQDVDIEPYVSKMLGTGKLGFSFVRITALMVSCNRLWIGTSNGVIISVPLAEVQQKTSSDPHGQMPLCCMANAQLSFHGHRDAVKFFVSVPMLQQPNLNGGLTFVNKRPDMLVMCGGEGYIDFRINDNDMENSIQLEPNQTIENRGDKSYLIVWHVSQR</sequence>
<accession>Q29EP6</accession>
<organism>
    <name type="scientific">Drosophila pseudoobscura pseudoobscura</name>
    <name type="common">Fruit fly</name>
    <dbReference type="NCBI Taxonomy" id="46245"/>
    <lineage>
        <taxon>Eukaryota</taxon>
        <taxon>Metazoa</taxon>
        <taxon>Ecdysozoa</taxon>
        <taxon>Arthropoda</taxon>
        <taxon>Hexapoda</taxon>
        <taxon>Insecta</taxon>
        <taxon>Pterygota</taxon>
        <taxon>Neoptera</taxon>
        <taxon>Endopterygota</taxon>
        <taxon>Diptera</taxon>
        <taxon>Brachycera</taxon>
        <taxon>Muscomorpha</taxon>
        <taxon>Ephydroidea</taxon>
        <taxon>Drosophilidae</taxon>
        <taxon>Drosophila</taxon>
        <taxon>Sophophora</taxon>
    </lineage>
</organism>
<protein>
    <recommendedName>
        <fullName>JNK-interacting protein 3</fullName>
    </recommendedName>
    <alternativeName>
        <fullName>Protein sunday driver</fullName>
    </alternativeName>
</protein>